<accession>Q5XE03</accession>
<accession>P58143</accession>
<accession>P82550</accession>
<gene>
    <name evidence="1" type="primary">gpsA</name>
    <name type="ordered locus">M6_Spy0225</name>
</gene>
<proteinExistence type="evidence at protein level"/>
<reference key="1">
    <citation type="journal article" date="2004" name="J. Infect. Dis.">
        <title>Progress toward characterization of the group A Streptococcus metagenome: complete genome sequence of a macrolide-resistant serotype M6 strain.</title>
        <authorList>
            <person name="Banks D.J."/>
            <person name="Porcella S.F."/>
            <person name="Barbian K.D."/>
            <person name="Beres S.B."/>
            <person name="Philips L.E."/>
            <person name="Voyich J.M."/>
            <person name="DeLeo F.R."/>
            <person name="Martin J.M."/>
            <person name="Somerville G.A."/>
            <person name="Musser J.M."/>
        </authorList>
    </citation>
    <scope>NUCLEOTIDE SEQUENCE [LARGE SCALE GENOMIC DNA]</scope>
    <source>
        <strain>ATCC BAA-946 / MGAS10394</strain>
    </source>
</reference>
<reference key="2">
    <citation type="submission" date="2000-05" db="UniProtKB">
        <title>Two-dimensional gel electrophoresis map of Streptococcus pyogenes proteins.</title>
        <authorList>
            <person name="Hogan D.A."/>
            <person name="Du P."/>
            <person name="Stevenson T.I."/>
            <person name="Whitton M."/>
            <person name="Kilby G.W."/>
            <person name="Rogers J."/>
            <person name="VanBogelen R.A."/>
        </authorList>
    </citation>
    <scope>PROTEIN SEQUENCE OF 92-100; 132-159; 166-214; 232-258; 278-290 AND 321-332</scope>
    <scope>MASS SPECTROMETRY</scope>
    <source>
        <strain>JRS4 / Serotype M6</strain>
    </source>
</reference>
<dbReference type="EC" id="1.1.1.94" evidence="1"/>
<dbReference type="EMBL" id="CP000003">
    <property type="protein sequence ID" value="AAT86360.1"/>
    <property type="molecule type" value="Genomic_DNA"/>
</dbReference>
<dbReference type="RefSeq" id="WP_011184140.1">
    <property type="nucleotide sequence ID" value="NC_006086.1"/>
</dbReference>
<dbReference type="SMR" id="Q5XE03"/>
<dbReference type="KEGG" id="spa:M6_Spy0225"/>
<dbReference type="HOGENOM" id="CLU_033449_0_2_9"/>
<dbReference type="UniPathway" id="UPA00940"/>
<dbReference type="Proteomes" id="UP000001167">
    <property type="component" value="Chromosome"/>
</dbReference>
<dbReference type="GO" id="GO:0005829">
    <property type="term" value="C:cytosol"/>
    <property type="evidence" value="ECO:0007669"/>
    <property type="project" value="TreeGrafter"/>
</dbReference>
<dbReference type="GO" id="GO:0047952">
    <property type="term" value="F:glycerol-3-phosphate dehydrogenase [NAD(P)+] activity"/>
    <property type="evidence" value="ECO:0007669"/>
    <property type="project" value="UniProtKB-UniRule"/>
</dbReference>
<dbReference type="GO" id="GO:0051287">
    <property type="term" value="F:NAD binding"/>
    <property type="evidence" value="ECO:0007669"/>
    <property type="project" value="InterPro"/>
</dbReference>
<dbReference type="GO" id="GO:0005975">
    <property type="term" value="P:carbohydrate metabolic process"/>
    <property type="evidence" value="ECO:0007669"/>
    <property type="project" value="InterPro"/>
</dbReference>
<dbReference type="GO" id="GO:0046167">
    <property type="term" value="P:glycerol-3-phosphate biosynthetic process"/>
    <property type="evidence" value="ECO:0007669"/>
    <property type="project" value="UniProtKB-UniRule"/>
</dbReference>
<dbReference type="GO" id="GO:0046168">
    <property type="term" value="P:glycerol-3-phosphate catabolic process"/>
    <property type="evidence" value="ECO:0007669"/>
    <property type="project" value="InterPro"/>
</dbReference>
<dbReference type="GO" id="GO:0006650">
    <property type="term" value="P:glycerophospholipid metabolic process"/>
    <property type="evidence" value="ECO:0007669"/>
    <property type="project" value="UniProtKB-UniRule"/>
</dbReference>
<dbReference type="GO" id="GO:0008654">
    <property type="term" value="P:phospholipid biosynthetic process"/>
    <property type="evidence" value="ECO:0007669"/>
    <property type="project" value="UniProtKB-KW"/>
</dbReference>
<dbReference type="FunFam" id="1.10.1040.10:FF:000001">
    <property type="entry name" value="Glycerol-3-phosphate dehydrogenase [NAD(P)+]"/>
    <property type="match status" value="1"/>
</dbReference>
<dbReference type="FunFam" id="3.40.50.720:FF:000019">
    <property type="entry name" value="Glycerol-3-phosphate dehydrogenase [NAD(P)+]"/>
    <property type="match status" value="1"/>
</dbReference>
<dbReference type="Gene3D" id="1.10.1040.10">
    <property type="entry name" value="N-(1-d-carboxylethyl)-l-norvaline Dehydrogenase, domain 2"/>
    <property type="match status" value="1"/>
</dbReference>
<dbReference type="Gene3D" id="3.40.50.720">
    <property type="entry name" value="NAD(P)-binding Rossmann-like Domain"/>
    <property type="match status" value="1"/>
</dbReference>
<dbReference type="HAMAP" id="MF_00394">
    <property type="entry name" value="NAD_Glyc3P_dehydrog"/>
    <property type="match status" value="1"/>
</dbReference>
<dbReference type="InterPro" id="IPR008927">
    <property type="entry name" value="6-PGluconate_DH-like_C_sf"/>
</dbReference>
<dbReference type="InterPro" id="IPR013328">
    <property type="entry name" value="6PGD_dom2"/>
</dbReference>
<dbReference type="InterPro" id="IPR006168">
    <property type="entry name" value="G3P_DH_NAD-dep"/>
</dbReference>
<dbReference type="InterPro" id="IPR006109">
    <property type="entry name" value="G3P_DH_NAD-dep_C"/>
</dbReference>
<dbReference type="InterPro" id="IPR011128">
    <property type="entry name" value="G3P_DH_NAD-dep_N"/>
</dbReference>
<dbReference type="InterPro" id="IPR036291">
    <property type="entry name" value="NAD(P)-bd_dom_sf"/>
</dbReference>
<dbReference type="NCBIfam" id="NF000940">
    <property type="entry name" value="PRK00094.1-2"/>
    <property type="match status" value="1"/>
</dbReference>
<dbReference type="NCBIfam" id="NF000941">
    <property type="entry name" value="PRK00094.1-3"/>
    <property type="match status" value="1"/>
</dbReference>
<dbReference type="NCBIfam" id="NF000942">
    <property type="entry name" value="PRK00094.1-4"/>
    <property type="match status" value="1"/>
</dbReference>
<dbReference type="PANTHER" id="PTHR11728">
    <property type="entry name" value="GLYCEROL-3-PHOSPHATE DEHYDROGENASE"/>
    <property type="match status" value="1"/>
</dbReference>
<dbReference type="PANTHER" id="PTHR11728:SF1">
    <property type="entry name" value="GLYCEROL-3-PHOSPHATE DEHYDROGENASE [NAD(+)] 2, CHLOROPLASTIC"/>
    <property type="match status" value="1"/>
</dbReference>
<dbReference type="Pfam" id="PF07479">
    <property type="entry name" value="NAD_Gly3P_dh_C"/>
    <property type="match status" value="1"/>
</dbReference>
<dbReference type="Pfam" id="PF01210">
    <property type="entry name" value="NAD_Gly3P_dh_N"/>
    <property type="match status" value="1"/>
</dbReference>
<dbReference type="PIRSF" id="PIRSF000114">
    <property type="entry name" value="Glycerol-3-P_dh"/>
    <property type="match status" value="1"/>
</dbReference>
<dbReference type="PRINTS" id="PR00077">
    <property type="entry name" value="GPDHDRGNASE"/>
</dbReference>
<dbReference type="SUPFAM" id="SSF48179">
    <property type="entry name" value="6-phosphogluconate dehydrogenase C-terminal domain-like"/>
    <property type="match status" value="1"/>
</dbReference>
<dbReference type="SUPFAM" id="SSF51735">
    <property type="entry name" value="NAD(P)-binding Rossmann-fold domains"/>
    <property type="match status" value="1"/>
</dbReference>
<dbReference type="PROSITE" id="PS00957">
    <property type="entry name" value="NAD_G3PDH"/>
    <property type="match status" value="1"/>
</dbReference>
<feature type="chain" id="PRO_0000138042" description="Glycerol-3-phosphate dehydrogenase [NAD(P)+]">
    <location>
        <begin position="1"/>
        <end position="338"/>
    </location>
</feature>
<feature type="active site" description="Proton acceptor" evidence="1">
    <location>
        <position position="194"/>
    </location>
</feature>
<feature type="binding site" evidence="1">
    <location>
        <position position="13"/>
    </location>
    <ligand>
        <name>NADPH</name>
        <dbReference type="ChEBI" id="CHEBI:57783"/>
    </ligand>
</feature>
<feature type="binding site" evidence="1">
    <location>
        <position position="14"/>
    </location>
    <ligand>
        <name>NADPH</name>
        <dbReference type="ChEBI" id="CHEBI:57783"/>
    </ligand>
</feature>
<feature type="binding site" evidence="1">
    <location>
        <position position="108"/>
    </location>
    <ligand>
        <name>NADPH</name>
        <dbReference type="ChEBI" id="CHEBI:57783"/>
    </ligand>
</feature>
<feature type="binding site" evidence="1">
    <location>
        <position position="108"/>
    </location>
    <ligand>
        <name>sn-glycerol 3-phosphate</name>
        <dbReference type="ChEBI" id="CHEBI:57597"/>
    </ligand>
</feature>
<feature type="binding site" evidence="1">
    <location>
        <position position="139"/>
    </location>
    <ligand>
        <name>sn-glycerol 3-phosphate</name>
        <dbReference type="ChEBI" id="CHEBI:57597"/>
    </ligand>
</feature>
<feature type="binding site" evidence="1">
    <location>
        <position position="141"/>
    </location>
    <ligand>
        <name>sn-glycerol 3-phosphate</name>
        <dbReference type="ChEBI" id="CHEBI:57597"/>
    </ligand>
</feature>
<feature type="binding site" evidence="1">
    <location>
        <position position="143"/>
    </location>
    <ligand>
        <name>NADPH</name>
        <dbReference type="ChEBI" id="CHEBI:57783"/>
    </ligand>
</feature>
<feature type="binding site" evidence="1">
    <location>
        <position position="194"/>
    </location>
    <ligand>
        <name>sn-glycerol 3-phosphate</name>
        <dbReference type="ChEBI" id="CHEBI:57597"/>
    </ligand>
</feature>
<feature type="binding site" evidence="1">
    <location>
        <position position="247"/>
    </location>
    <ligand>
        <name>sn-glycerol 3-phosphate</name>
        <dbReference type="ChEBI" id="CHEBI:57597"/>
    </ligand>
</feature>
<feature type="binding site" evidence="1">
    <location>
        <position position="257"/>
    </location>
    <ligand>
        <name>sn-glycerol 3-phosphate</name>
        <dbReference type="ChEBI" id="CHEBI:57597"/>
    </ligand>
</feature>
<feature type="binding site" evidence="1">
    <location>
        <position position="258"/>
    </location>
    <ligand>
        <name>NADPH</name>
        <dbReference type="ChEBI" id="CHEBI:57783"/>
    </ligand>
</feature>
<feature type="binding site" evidence="1">
    <location>
        <position position="258"/>
    </location>
    <ligand>
        <name>sn-glycerol 3-phosphate</name>
        <dbReference type="ChEBI" id="CHEBI:57597"/>
    </ligand>
</feature>
<feature type="binding site" evidence="1">
    <location>
        <position position="259"/>
    </location>
    <ligand>
        <name>sn-glycerol 3-phosphate</name>
        <dbReference type="ChEBI" id="CHEBI:57597"/>
    </ligand>
</feature>
<feature type="binding site" evidence="1">
    <location>
        <position position="282"/>
    </location>
    <ligand>
        <name>NADPH</name>
        <dbReference type="ChEBI" id="CHEBI:57783"/>
    </ligand>
</feature>
<feature type="binding site" evidence="1">
    <location>
        <position position="284"/>
    </location>
    <ligand>
        <name>NADPH</name>
        <dbReference type="ChEBI" id="CHEBI:57783"/>
    </ligand>
</feature>
<comment type="function">
    <text evidence="1">Catalyzes the reduction of the glycolytic intermediate dihydroxyacetone phosphate (DHAP) to sn-glycerol 3-phosphate (G3P), the key precursor for phospholipid synthesis.</text>
</comment>
<comment type="catalytic activity">
    <reaction evidence="1">
        <text>sn-glycerol 3-phosphate + NAD(+) = dihydroxyacetone phosphate + NADH + H(+)</text>
        <dbReference type="Rhea" id="RHEA:11092"/>
        <dbReference type="ChEBI" id="CHEBI:15378"/>
        <dbReference type="ChEBI" id="CHEBI:57540"/>
        <dbReference type="ChEBI" id="CHEBI:57597"/>
        <dbReference type="ChEBI" id="CHEBI:57642"/>
        <dbReference type="ChEBI" id="CHEBI:57945"/>
        <dbReference type="EC" id="1.1.1.94"/>
    </reaction>
    <physiologicalReaction direction="right-to-left" evidence="1">
        <dbReference type="Rhea" id="RHEA:11094"/>
    </physiologicalReaction>
</comment>
<comment type="catalytic activity">
    <reaction evidence="1">
        <text>sn-glycerol 3-phosphate + NADP(+) = dihydroxyacetone phosphate + NADPH + H(+)</text>
        <dbReference type="Rhea" id="RHEA:11096"/>
        <dbReference type="ChEBI" id="CHEBI:15378"/>
        <dbReference type="ChEBI" id="CHEBI:57597"/>
        <dbReference type="ChEBI" id="CHEBI:57642"/>
        <dbReference type="ChEBI" id="CHEBI:57783"/>
        <dbReference type="ChEBI" id="CHEBI:58349"/>
        <dbReference type="EC" id="1.1.1.94"/>
    </reaction>
    <physiologicalReaction direction="right-to-left" evidence="1">
        <dbReference type="Rhea" id="RHEA:11098"/>
    </physiologicalReaction>
</comment>
<comment type="pathway">
    <text evidence="1">Membrane lipid metabolism; glycerophospholipid metabolism.</text>
</comment>
<comment type="subcellular location">
    <subcellularLocation>
        <location evidence="1 3">Cytoplasm</location>
    </subcellularLocation>
</comment>
<comment type="mass spectrometry" mass="36680.8" method="Electrospray" evidence="2"/>
<comment type="similarity">
    <text evidence="1">Belongs to the NAD-dependent glycerol-3-phosphate dehydrogenase family.</text>
</comment>
<sequence length="338" mass="36651">MTKQKVAILGPGSWGTALSQVLNDNGHDVRLWGNIPDQIEEINTKHTNRHYFKDIVLDKNITATLDLGQALSDVDAVLFVVPTKVTRLVARQVAAILDHKVVVMHASKGLEPETHERLSTILEEVIPAHFRSEVVVVSGPSHAEETIVRDITLITAASKDIEAAKYVQSLFSNHYFRLYTNTDVIGVETAGALKNIIAVGAGALHGLGYGDNAKAAVITRGLAEITRLGVKLGADPLTYSGLSGVGDLIVTGTSVHSRNWRAGAALGRGEKLEDIERNMGMVIEGIATTKVAYEIAQDLGVYMPITTAIYKSIYEGADIKESILGMMSNEFRSENEWH</sequence>
<name>GPDA_STRP6</name>
<protein>
    <recommendedName>
        <fullName evidence="1">Glycerol-3-phosphate dehydrogenase [NAD(P)+]</fullName>
        <ecNumber evidence="1">1.1.1.94</ecNumber>
    </recommendedName>
    <alternativeName>
        <fullName evidence="1">NAD(P)(+)-dependent glycerol-3-phosphate dehydrogenase</fullName>
    </alternativeName>
    <alternativeName>
        <fullName evidence="1">NAD(P)H-dependent dihydroxyacetone-phosphate reductase</fullName>
    </alternativeName>
</protein>
<evidence type="ECO:0000255" key="1">
    <source>
        <dbReference type="HAMAP-Rule" id="MF_00394"/>
    </source>
</evidence>
<evidence type="ECO:0000269" key="2">
    <source ref="2"/>
</evidence>
<evidence type="ECO:0000305" key="3"/>
<keyword id="KW-0963">Cytoplasm</keyword>
<keyword id="KW-0903">Direct protein sequencing</keyword>
<keyword id="KW-0444">Lipid biosynthesis</keyword>
<keyword id="KW-0443">Lipid metabolism</keyword>
<keyword id="KW-0520">NAD</keyword>
<keyword id="KW-0521">NADP</keyword>
<keyword id="KW-0547">Nucleotide-binding</keyword>
<keyword id="KW-0560">Oxidoreductase</keyword>
<keyword id="KW-0594">Phospholipid biosynthesis</keyword>
<keyword id="KW-1208">Phospholipid metabolism</keyword>
<organism>
    <name type="scientific">Streptococcus pyogenes serotype M6 (strain ATCC BAA-946 / MGAS10394)</name>
    <dbReference type="NCBI Taxonomy" id="286636"/>
    <lineage>
        <taxon>Bacteria</taxon>
        <taxon>Bacillati</taxon>
        <taxon>Bacillota</taxon>
        <taxon>Bacilli</taxon>
        <taxon>Lactobacillales</taxon>
        <taxon>Streptococcaceae</taxon>
        <taxon>Streptococcus</taxon>
    </lineage>
</organism>